<keyword id="KW-0687">Ribonucleoprotein</keyword>
<keyword id="KW-0689">Ribosomal protein</keyword>
<gene>
    <name evidence="1" type="primary">rpsP</name>
    <name type="ordered locus">Bcenmc03_1028</name>
</gene>
<name>RS16_BURO0</name>
<sequence length="84" mass="9475">MVIIRLARGGSKKRPFYNIVATDSRNRRDGRFIERVGFYNPVATKGESLRIAQDRLTYWQGVGAQLSPTVQRLVKEAQKAQPAA</sequence>
<reference key="1">
    <citation type="submission" date="2008-02" db="EMBL/GenBank/DDBJ databases">
        <title>Complete sequence of chromosome 1 of Burkholderia cenocepacia MC0-3.</title>
        <authorList>
            <person name="Copeland A."/>
            <person name="Lucas S."/>
            <person name="Lapidus A."/>
            <person name="Barry K."/>
            <person name="Bruce D."/>
            <person name="Goodwin L."/>
            <person name="Glavina del Rio T."/>
            <person name="Dalin E."/>
            <person name="Tice H."/>
            <person name="Pitluck S."/>
            <person name="Chain P."/>
            <person name="Malfatti S."/>
            <person name="Shin M."/>
            <person name="Vergez L."/>
            <person name="Schmutz J."/>
            <person name="Larimer F."/>
            <person name="Land M."/>
            <person name="Hauser L."/>
            <person name="Kyrpides N."/>
            <person name="Mikhailova N."/>
            <person name="Tiedje J."/>
            <person name="Richardson P."/>
        </authorList>
    </citation>
    <scope>NUCLEOTIDE SEQUENCE [LARGE SCALE GENOMIC DNA]</scope>
    <source>
        <strain>MC0-3</strain>
    </source>
</reference>
<comment type="similarity">
    <text evidence="1">Belongs to the bacterial ribosomal protein bS16 family.</text>
</comment>
<feature type="chain" id="PRO_1000196353" description="Small ribosomal subunit protein bS16">
    <location>
        <begin position="1"/>
        <end position="84"/>
    </location>
</feature>
<accession>B1JXU3</accession>
<organism>
    <name type="scientific">Burkholderia orbicola (strain MC0-3)</name>
    <dbReference type="NCBI Taxonomy" id="406425"/>
    <lineage>
        <taxon>Bacteria</taxon>
        <taxon>Pseudomonadati</taxon>
        <taxon>Pseudomonadota</taxon>
        <taxon>Betaproteobacteria</taxon>
        <taxon>Burkholderiales</taxon>
        <taxon>Burkholderiaceae</taxon>
        <taxon>Burkholderia</taxon>
        <taxon>Burkholderia cepacia complex</taxon>
        <taxon>Burkholderia orbicola</taxon>
    </lineage>
</organism>
<evidence type="ECO:0000255" key="1">
    <source>
        <dbReference type="HAMAP-Rule" id="MF_00385"/>
    </source>
</evidence>
<evidence type="ECO:0000305" key="2"/>
<proteinExistence type="inferred from homology"/>
<protein>
    <recommendedName>
        <fullName evidence="1">Small ribosomal subunit protein bS16</fullName>
    </recommendedName>
    <alternativeName>
        <fullName evidence="2">30S ribosomal protein S16</fullName>
    </alternativeName>
</protein>
<dbReference type="EMBL" id="CP000958">
    <property type="protein sequence ID" value="ACA90205.1"/>
    <property type="molecule type" value="Genomic_DNA"/>
</dbReference>
<dbReference type="RefSeq" id="WP_006476550.1">
    <property type="nucleotide sequence ID" value="NC_010508.1"/>
</dbReference>
<dbReference type="SMR" id="B1JXU3"/>
<dbReference type="GeneID" id="98102517"/>
<dbReference type="KEGG" id="bcm:Bcenmc03_1028"/>
<dbReference type="HOGENOM" id="CLU_100590_5_1_4"/>
<dbReference type="Proteomes" id="UP000002169">
    <property type="component" value="Chromosome 1"/>
</dbReference>
<dbReference type="GO" id="GO:0005737">
    <property type="term" value="C:cytoplasm"/>
    <property type="evidence" value="ECO:0007669"/>
    <property type="project" value="UniProtKB-ARBA"/>
</dbReference>
<dbReference type="GO" id="GO:0015935">
    <property type="term" value="C:small ribosomal subunit"/>
    <property type="evidence" value="ECO:0007669"/>
    <property type="project" value="TreeGrafter"/>
</dbReference>
<dbReference type="GO" id="GO:0003735">
    <property type="term" value="F:structural constituent of ribosome"/>
    <property type="evidence" value="ECO:0007669"/>
    <property type="project" value="InterPro"/>
</dbReference>
<dbReference type="GO" id="GO:0006412">
    <property type="term" value="P:translation"/>
    <property type="evidence" value="ECO:0007669"/>
    <property type="project" value="UniProtKB-UniRule"/>
</dbReference>
<dbReference type="Gene3D" id="3.30.1320.10">
    <property type="match status" value="1"/>
</dbReference>
<dbReference type="HAMAP" id="MF_00385">
    <property type="entry name" value="Ribosomal_bS16"/>
    <property type="match status" value="1"/>
</dbReference>
<dbReference type="InterPro" id="IPR000307">
    <property type="entry name" value="Ribosomal_bS16"/>
</dbReference>
<dbReference type="InterPro" id="IPR023803">
    <property type="entry name" value="Ribosomal_bS16_dom_sf"/>
</dbReference>
<dbReference type="NCBIfam" id="TIGR00002">
    <property type="entry name" value="S16"/>
    <property type="match status" value="1"/>
</dbReference>
<dbReference type="PANTHER" id="PTHR12919">
    <property type="entry name" value="30S RIBOSOMAL PROTEIN S16"/>
    <property type="match status" value="1"/>
</dbReference>
<dbReference type="PANTHER" id="PTHR12919:SF20">
    <property type="entry name" value="SMALL RIBOSOMAL SUBUNIT PROTEIN BS16M"/>
    <property type="match status" value="1"/>
</dbReference>
<dbReference type="Pfam" id="PF00886">
    <property type="entry name" value="Ribosomal_S16"/>
    <property type="match status" value="1"/>
</dbReference>
<dbReference type="SUPFAM" id="SSF54565">
    <property type="entry name" value="Ribosomal protein S16"/>
    <property type="match status" value="1"/>
</dbReference>